<dbReference type="GO" id="GO:0005576">
    <property type="term" value="C:extracellular region"/>
    <property type="evidence" value="ECO:0007669"/>
    <property type="project" value="UniProtKB-SubCell"/>
</dbReference>
<dbReference type="GO" id="GO:0090729">
    <property type="term" value="F:toxin activity"/>
    <property type="evidence" value="ECO:0007669"/>
    <property type="project" value="UniProtKB-KW"/>
</dbReference>
<dbReference type="GO" id="GO:0042742">
    <property type="term" value="P:defense response to bacterium"/>
    <property type="evidence" value="ECO:0007669"/>
    <property type="project" value="UniProtKB-KW"/>
</dbReference>
<dbReference type="GO" id="GO:0050832">
    <property type="term" value="P:defense response to fungus"/>
    <property type="evidence" value="ECO:0007669"/>
    <property type="project" value="UniProtKB-KW"/>
</dbReference>
<dbReference type="GO" id="GO:0045087">
    <property type="term" value="P:innate immune response"/>
    <property type="evidence" value="ECO:0007669"/>
    <property type="project" value="UniProtKB-KW"/>
</dbReference>
<dbReference type="GO" id="GO:0031640">
    <property type="term" value="P:killing of cells of another organism"/>
    <property type="evidence" value="ECO:0007669"/>
    <property type="project" value="UniProtKB-KW"/>
</dbReference>
<dbReference type="InterPro" id="IPR013213">
    <property type="entry name" value="Mastoparan"/>
</dbReference>
<dbReference type="Pfam" id="PF08249">
    <property type="entry name" value="Mastoparan"/>
    <property type="match status" value="1"/>
</dbReference>
<feature type="peptide" id="PRO_0000306370" description="Mastoparan-like peptide 12d" evidence="3">
    <location>
        <begin position="1"/>
        <end position="14"/>
    </location>
</feature>
<feature type="modified residue" description="Leucine amide" evidence="3">
    <location>
        <position position="14"/>
    </location>
</feature>
<sequence>INLKAIAAMAKKLL</sequence>
<keyword id="KW-0027">Amidation</keyword>
<keyword id="KW-0044">Antibiotic</keyword>
<keyword id="KW-0929">Antimicrobial</keyword>
<keyword id="KW-0903">Direct protein sequencing</keyword>
<keyword id="KW-0295">Fungicide</keyword>
<keyword id="KW-1213">G-protein coupled receptor impairing toxin</keyword>
<keyword id="KW-0391">Immunity</keyword>
<keyword id="KW-0399">Innate immunity</keyword>
<keyword id="KW-0467">Mast cell degranulation</keyword>
<keyword id="KW-0964">Secreted</keyword>
<keyword id="KW-0800">Toxin</keyword>
<name>MASTD_VESMG</name>
<reference key="1">
    <citation type="journal article" date="2006" name="Peptides">
        <title>The mastoparanogen from wasp.</title>
        <authorList>
            <person name="Xu X."/>
            <person name="Yang H."/>
            <person name="Yu H."/>
            <person name="Li J."/>
            <person name="Lai R."/>
        </authorList>
    </citation>
    <scope>PROTEIN SEQUENCE</scope>
    <scope>FUNCTION</scope>
    <scope>AMIDATION AT LEU-14</scope>
    <scope>MASS SPECTROMETRY</scope>
    <scope>SUBCELLULAR LOCATION</scope>
    <source>
        <tissue>Venom</tissue>
    </source>
</reference>
<organism>
    <name type="scientific">Vespa magnifica</name>
    <name type="common">Hornet</name>
    <dbReference type="NCBI Taxonomy" id="202807"/>
    <lineage>
        <taxon>Eukaryota</taxon>
        <taxon>Metazoa</taxon>
        <taxon>Ecdysozoa</taxon>
        <taxon>Arthropoda</taxon>
        <taxon>Hexapoda</taxon>
        <taxon>Insecta</taxon>
        <taxon>Pterygota</taxon>
        <taxon>Neoptera</taxon>
        <taxon>Endopterygota</taxon>
        <taxon>Hymenoptera</taxon>
        <taxon>Apocrita</taxon>
        <taxon>Aculeata</taxon>
        <taxon>Vespoidea</taxon>
        <taxon>Vespidae</taxon>
        <taxon>Vespinae</taxon>
        <taxon>Vespa</taxon>
    </lineage>
</organism>
<proteinExistence type="evidence at protein level"/>
<protein>
    <recommendedName>
        <fullName evidence="4">Mastoparan-like peptide 12d</fullName>
    </recommendedName>
</protein>
<evidence type="ECO:0000250" key="1">
    <source>
        <dbReference type="UniProtKB" id="P01514"/>
    </source>
</evidence>
<evidence type="ECO:0000250" key="2">
    <source>
        <dbReference type="UniProtKB" id="P84914"/>
    </source>
</evidence>
<evidence type="ECO:0000269" key="3">
    <source>
    </source>
</evidence>
<evidence type="ECO:0000303" key="4">
    <source>
    </source>
</evidence>
<evidence type="ECO:0000305" key="5"/>
<evidence type="ECO:0000305" key="6">
    <source>
    </source>
</evidence>
<comment type="function">
    <text evidence="1 2 3">Shows mast cell degranulation and antimicrobial activities against the Gram-negative bacteria E.coli ATCC 25922 (MIC=3.0 ug/ml), the Gram-positive bacteria S.aureus ATCC 2592 (MIC=1.5 ug/ml) and the fungus C.albicans ATCC 2002 (MIC=12.0 ug/ml) (PubMed:17046111). Its mast cell degranulation activity may be related to the activation of G-protein coupled receptors in mast cells as well as interaction with other proteins located in cell endosomal membranes in the mast cells (By similarity).</text>
</comment>
<comment type="subcellular location">
    <subcellularLocation>
        <location evidence="3">Secreted</location>
    </subcellularLocation>
</comment>
<comment type="tissue specificity">
    <text evidence="6">Expressed by the venom gland.</text>
</comment>
<comment type="mass spectrometry"/>
<comment type="similarity">
    <text evidence="5">Belongs to the MCD family. Mastoparan subfamily.</text>
</comment>
<accession>P0C5G7</accession>